<name>IDI_SHIB3</name>
<dbReference type="EC" id="5.3.3.2" evidence="1"/>
<dbReference type="EMBL" id="CP001063">
    <property type="protein sequence ID" value="ACD06697.1"/>
    <property type="molecule type" value="Genomic_DNA"/>
</dbReference>
<dbReference type="RefSeq" id="WP_001192786.1">
    <property type="nucleotide sequence ID" value="NC_010658.1"/>
</dbReference>
<dbReference type="SMR" id="B2U0Q6"/>
<dbReference type="STRING" id="344609.SbBS512_E3308"/>
<dbReference type="KEGG" id="sbc:SbBS512_E3308"/>
<dbReference type="HOGENOM" id="CLU_060552_2_0_6"/>
<dbReference type="UniPathway" id="UPA00059">
    <property type="reaction ID" value="UER00104"/>
</dbReference>
<dbReference type="Proteomes" id="UP000001030">
    <property type="component" value="Chromosome"/>
</dbReference>
<dbReference type="GO" id="GO:0005737">
    <property type="term" value="C:cytoplasm"/>
    <property type="evidence" value="ECO:0007669"/>
    <property type="project" value="UniProtKB-SubCell"/>
</dbReference>
<dbReference type="GO" id="GO:0004452">
    <property type="term" value="F:isopentenyl-diphosphate delta-isomerase activity"/>
    <property type="evidence" value="ECO:0007669"/>
    <property type="project" value="UniProtKB-UniRule"/>
</dbReference>
<dbReference type="GO" id="GO:0046872">
    <property type="term" value="F:metal ion binding"/>
    <property type="evidence" value="ECO:0007669"/>
    <property type="project" value="UniProtKB-KW"/>
</dbReference>
<dbReference type="GO" id="GO:0050992">
    <property type="term" value="P:dimethylallyl diphosphate biosynthetic process"/>
    <property type="evidence" value="ECO:0007669"/>
    <property type="project" value="UniProtKB-UniRule"/>
</dbReference>
<dbReference type="GO" id="GO:0008299">
    <property type="term" value="P:isoprenoid biosynthetic process"/>
    <property type="evidence" value="ECO:0007669"/>
    <property type="project" value="UniProtKB-KW"/>
</dbReference>
<dbReference type="CDD" id="cd02885">
    <property type="entry name" value="NUDIX_IPP_Isomerase"/>
    <property type="match status" value="1"/>
</dbReference>
<dbReference type="FunFam" id="3.90.79.10:FF:000009">
    <property type="entry name" value="Isopentenyl-diphosphate Delta-isomerase"/>
    <property type="match status" value="1"/>
</dbReference>
<dbReference type="Gene3D" id="3.90.79.10">
    <property type="entry name" value="Nucleoside Triphosphate Pyrophosphohydrolase"/>
    <property type="match status" value="1"/>
</dbReference>
<dbReference type="HAMAP" id="MF_00202">
    <property type="entry name" value="Idi"/>
    <property type="match status" value="1"/>
</dbReference>
<dbReference type="InterPro" id="IPR056375">
    <property type="entry name" value="Idi_bact"/>
</dbReference>
<dbReference type="InterPro" id="IPR011876">
    <property type="entry name" value="IsopentenylPP_isomerase_typ1"/>
</dbReference>
<dbReference type="InterPro" id="IPR015797">
    <property type="entry name" value="NUDIX_hydrolase-like_dom_sf"/>
</dbReference>
<dbReference type="InterPro" id="IPR000086">
    <property type="entry name" value="NUDIX_hydrolase_dom"/>
</dbReference>
<dbReference type="NCBIfam" id="TIGR02150">
    <property type="entry name" value="IPP_isom_1"/>
    <property type="match status" value="1"/>
</dbReference>
<dbReference type="NCBIfam" id="NF002995">
    <property type="entry name" value="PRK03759.1"/>
    <property type="match status" value="1"/>
</dbReference>
<dbReference type="PANTHER" id="PTHR10885">
    <property type="entry name" value="ISOPENTENYL-DIPHOSPHATE DELTA-ISOMERASE"/>
    <property type="match status" value="1"/>
</dbReference>
<dbReference type="PANTHER" id="PTHR10885:SF0">
    <property type="entry name" value="ISOPENTENYL-DIPHOSPHATE DELTA-ISOMERASE"/>
    <property type="match status" value="1"/>
</dbReference>
<dbReference type="Pfam" id="PF00293">
    <property type="entry name" value="NUDIX"/>
    <property type="match status" value="1"/>
</dbReference>
<dbReference type="PIRSF" id="PIRSF018427">
    <property type="entry name" value="Isopntndiph_ism"/>
    <property type="match status" value="1"/>
</dbReference>
<dbReference type="SUPFAM" id="SSF55811">
    <property type="entry name" value="Nudix"/>
    <property type="match status" value="1"/>
</dbReference>
<dbReference type="PROSITE" id="PS51462">
    <property type="entry name" value="NUDIX"/>
    <property type="match status" value="1"/>
</dbReference>
<sequence length="182" mass="20412">MQTEHVILLNAQGVPTGTLEKYAAHTADTLLHLAFSSWLFNAKGQLLVTRRALSKKAWPGVWTNSVCGHPQLGERNEDAVIRRCRYELGVEITPPESIYPDFRYRATDPNGIVENEVCPVFAARTNSALQINDDEVMDYQWCDLADVLHGIDATPWAFSPWMVMQAANSEARKLLSAFAQHN</sequence>
<gene>
    <name evidence="1" type="primary">idi</name>
    <name type="ordered locus">SbBS512_E3308</name>
</gene>
<keyword id="KW-0963">Cytoplasm</keyword>
<keyword id="KW-0413">Isomerase</keyword>
<keyword id="KW-0414">Isoprene biosynthesis</keyword>
<keyword id="KW-0460">Magnesium</keyword>
<keyword id="KW-0464">Manganese</keyword>
<keyword id="KW-0479">Metal-binding</keyword>
<keyword id="KW-1185">Reference proteome</keyword>
<proteinExistence type="inferred from homology"/>
<organism>
    <name type="scientific">Shigella boydii serotype 18 (strain CDC 3083-94 / BS512)</name>
    <dbReference type="NCBI Taxonomy" id="344609"/>
    <lineage>
        <taxon>Bacteria</taxon>
        <taxon>Pseudomonadati</taxon>
        <taxon>Pseudomonadota</taxon>
        <taxon>Gammaproteobacteria</taxon>
        <taxon>Enterobacterales</taxon>
        <taxon>Enterobacteriaceae</taxon>
        <taxon>Shigella</taxon>
    </lineage>
</organism>
<reference key="1">
    <citation type="submission" date="2008-05" db="EMBL/GenBank/DDBJ databases">
        <title>Complete sequence of Shigella boydii serotype 18 strain BS512.</title>
        <authorList>
            <person name="Rasko D.A."/>
            <person name="Rosovitz M."/>
            <person name="Maurelli A.T."/>
            <person name="Myers G."/>
            <person name="Seshadri R."/>
            <person name="Cer R."/>
            <person name="Jiang L."/>
            <person name="Ravel J."/>
            <person name="Sebastian Y."/>
        </authorList>
    </citation>
    <scope>NUCLEOTIDE SEQUENCE [LARGE SCALE GENOMIC DNA]</scope>
    <source>
        <strain>CDC 3083-94 / BS512</strain>
    </source>
</reference>
<evidence type="ECO:0000255" key="1">
    <source>
        <dbReference type="HAMAP-Rule" id="MF_00202"/>
    </source>
</evidence>
<protein>
    <recommendedName>
        <fullName evidence="1">Isopentenyl-diphosphate Delta-isomerase</fullName>
        <shortName evidence="1">IPP isomerase</shortName>
        <ecNumber evidence="1">5.3.3.2</ecNumber>
    </recommendedName>
    <alternativeName>
        <fullName evidence="1">IPP:DMAPP isomerase</fullName>
    </alternativeName>
    <alternativeName>
        <fullName evidence="1">Isopentenyl pyrophosphate isomerase</fullName>
    </alternativeName>
</protein>
<comment type="function">
    <text evidence="1">Catalyzes the 1,3-allylic rearrangement of the homoallylic substrate isopentenyl (IPP) to its highly electrophilic allylic isomer, dimethylallyl diphosphate (DMAPP).</text>
</comment>
<comment type="catalytic activity">
    <reaction evidence="1">
        <text>isopentenyl diphosphate = dimethylallyl diphosphate</text>
        <dbReference type="Rhea" id="RHEA:23284"/>
        <dbReference type="ChEBI" id="CHEBI:57623"/>
        <dbReference type="ChEBI" id="CHEBI:128769"/>
        <dbReference type="EC" id="5.3.3.2"/>
    </reaction>
</comment>
<comment type="cofactor">
    <cofactor evidence="1">
        <name>Mg(2+)</name>
        <dbReference type="ChEBI" id="CHEBI:18420"/>
    </cofactor>
    <text evidence="1">Binds 1 Mg(2+) ion per subunit. The magnesium ion binds only when substrate is bound.</text>
</comment>
<comment type="cofactor">
    <cofactor evidence="1">
        <name>Mn(2+)</name>
        <dbReference type="ChEBI" id="CHEBI:29035"/>
    </cofactor>
    <text evidence="1">Binds 1 Mn(2+) ion per subunit.</text>
</comment>
<comment type="pathway">
    <text evidence="1">Isoprenoid biosynthesis; dimethylallyl diphosphate biosynthesis; dimethylallyl diphosphate from isopentenyl diphosphate: step 1/1.</text>
</comment>
<comment type="subunit">
    <text evidence="1">Homodimer.</text>
</comment>
<comment type="subcellular location">
    <subcellularLocation>
        <location evidence="1">Cytoplasm</location>
    </subcellularLocation>
</comment>
<comment type="similarity">
    <text evidence="1">Belongs to the IPP isomerase type 1 family.</text>
</comment>
<accession>B2U0Q6</accession>
<feature type="chain" id="PRO_1000099448" description="Isopentenyl-diphosphate Delta-isomerase">
    <location>
        <begin position="1"/>
        <end position="182"/>
    </location>
</feature>
<feature type="domain" description="Nudix hydrolase">
    <location>
        <begin position="30"/>
        <end position="164"/>
    </location>
</feature>
<feature type="active site" evidence="1">
    <location>
        <position position="67"/>
    </location>
</feature>
<feature type="active site" evidence="1">
    <location>
        <position position="116"/>
    </location>
</feature>
<feature type="binding site" evidence="1">
    <location>
        <position position="25"/>
    </location>
    <ligand>
        <name>Mn(2+)</name>
        <dbReference type="ChEBI" id="CHEBI:29035"/>
    </ligand>
</feature>
<feature type="binding site" evidence="1">
    <location>
        <position position="32"/>
    </location>
    <ligand>
        <name>Mn(2+)</name>
        <dbReference type="ChEBI" id="CHEBI:29035"/>
    </ligand>
</feature>
<feature type="binding site" evidence="1">
    <location>
        <position position="69"/>
    </location>
    <ligand>
        <name>Mn(2+)</name>
        <dbReference type="ChEBI" id="CHEBI:29035"/>
    </ligand>
</feature>
<feature type="binding site" evidence="1">
    <location>
        <position position="87"/>
    </location>
    <ligand>
        <name>Mg(2+)</name>
        <dbReference type="ChEBI" id="CHEBI:18420"/>
    </ligand>
</feature>
<feature type="binding site" evidence="1">
    <location>
        <position position="114"/>
    </location>
    <ligand>
        <name>Mn(2+)</name>
        <dbReference type="ChEBI" id="CHEBI:29035"/>
    </ligand>
</feature>
<feature type="binding site" evidence="1">
    <location>
        <position position="116"/>
    </location>
    <ligand>
        <name>Mn(2+)</name>
        <dbReference type="ChEBI" id="CHEBI:29035"/>
    </ligand>
</feature>